<keyword id="KW-0413">Isomerase</keyword>
<keyword id="KW-1185">Reference proteome</keyword>
<keyword id="KW-0819">tRNA processing</keyword>
<feature type="chain" id="PRO_0000057352" description="tRNA pseudouridine synthase A">
    <location>
        <begin position="1"/>
        <end position="270"/>
    </location>
</feature>
<feature type="active site" description="Nucleophile" evidence="1">
    <location>
        <position position="51"/>
    </location>
</feature>
<feature type="binding site" evidence="1">
    <location>
        <position position="109"/>
    </location>
    <ligand>
        <name>substrate</name>
    </ligand>
</feature>
<dbReference type="EC" id="5.4.99.12" evidence="1"/>
<dbReference type="EMBL" id="AB091435">
    <property type="protein sequence ID" value="BAC65262.1"/>
    <property type="molecule type" value="Genomic_DNA"/>
</dbReference>
<dbReference type="EMBL" id="CP000869">
    <property type="protein sequence ID" value="ABX18302.1"/>
    <property type="molecule type" value="Genomic_DNA"/>
</dbReference>
<dbReference type="EMBL" id="AP009386">
    <property type="protein sequence ID" value="BAG45747.1"/>
    <property type="molecule type" value="Genomic_DNA"/>
</dbReference>
<dbReference type="RefSeq" id="WP_012217297.1">
    <property type="nucleotide sequence ID" value="NC_010086.1"/>
</dbReference>
<dbReference type="SMR" id="Q83WJ5"/>
<dbReference type="STRING" id="395019.BMULJ_03887"/>
<dbReference type="KEGG" id="bmj:BMULJ_03887"/>
<dbReference type="KEGG" id="bmu:Bmul_4624"/>
<dbReference type="eggNOG" id="COG0101">
    <property type="taxonomic scope" value="Bacteria"/>
</dbReference>
<dbReference type="HOGENOM" id="CLU_014673_0_2_4"/>
<dbReference type="Proteomes" id="UP000008815">
    <property type="component" value="Chromosome 2"/>
</dbReference>
<dbReference type="GO" id="GO:0003723">
    <property type="term" value="F:RNA binding"/>
    <property type="evidence" value="ECO:0007669"/>
    <property type="project" value="InterPro"/>
</dbReference>
<dbReference type="GO" id="GO:0160147">
    <property type="term" value="F:tRNA pseudouridine(38-40) synthase activity"/>
    <property type="evidence" value="ECO:0007669"/>
    <property type="project" value="UniProtKB-EC"/>
</dbReference>
<dbReference type="GO" id="GO:0031119">
    <property type="term" value="P:tRNA pseudouridine synthesis"/>
    <property type="evidence" value="ECO:0007669"/>
    <property type="project" value="UniProtKB-UniRule"/>
</dbReference>
<dbReference type="CDD" id="cd02570">
    <property type="entry name" value="PseudoU_synth_EcTruA"/>
    <property type="match status" value="1"/>
</dbReference>
<dbReference type="FunFam" id="3.30.70.580:FF:000001">
    <property type="entry name" value="tRNA pseudouridine synthase A"/>
    <property type="match status" value="1"/>
</dbReference>
<dbReference type="Gene3D" id="3.30.70.660">
    <property type="entry name" value="Pseudouridine synthase I, catalytic domain, C-terminal subdomain"/>
    <property type="match status" value="1"/>
</dbReference>
<dbReference type="Gene3D" id="3.30.70.580">
    <property type="entry name" value="Pseudouridine synthase I, catalytic domain, N-terminal subdomain"/>
    <property type="match status" value="1"/>
</dbReference>
<dbReference type="HAMAP" id="MF_00171">
    <property type="entry name" value="TruA"/>
    <property type="match status" value="1"/>
</dbReference>
<dbReference type="InterPro" id="IPR020103">
    <property type="entry name" value="PsdUridine_synth_cat_dom_sf"/>
</dbReference>
<dbReference type="InterPro" id="IPR001406">
    <property type="entry name" value="PsdUridine_synth_TruA"/>
</dbReference>
<dbReference type="InterPro" id="IPR020097">
    <property type="entry name" value="PsdUridine_synth_TruA_a/b_dom"/>
</dbReference>
<dbReference type="InterPro" id="IPR020095">
    <property type="entry name" value="PsdUridine_synth_TruA_C"/>
</dbReference>
<dbReference type="InterPro" id="IPR020094">
    <property type="entry name" value="TruA/RsuA/RluB/E/F_N"/>
</dbReference>
<dbReference type="NCBIfam" id="TIGR00071">
    <property type="entry name" value="hisT_truA"/>
    <property type="match status" value="1"/>
</dbReference>
<dbReference type="PANTHER" id="PTHR11142">
    <property type="entry name" value="PSEUDOURIDYLATE SYNTHASE"/>
    <property type="match status" value="1"/>
</dbReference>
<dbReference type="PANTHER" id="PTHR11142:SF0">
    <property type="entry name" value="TRNA PSEUDOURIDINE SYNTHASE-LIKE 1"/>
    <property type="match status" value="1"/>
</dbReference>
<dbReference type="Pfam" id="PF01416">
    <property type="entry name" value="PseudoU_synth_1"/>
    <property type="match status" value="2"/>
</dbReference>
<dbReference type="PIRSF" id="PIRSF001430">
    <property type="entry name" value="tRNA_psdUrid_synth"/>
    <property type="match status" value="1"/>
</dbReference>
<dbReference type="SUPFAM" id="SSF55120">
    <property type="entry name" value="Pseudouridine synthase"/>
    <property type="match status" value="1"/>
</dbReference>
<reference key="1">
    <citation type="journal article" date="2003" name="J. Bacteriol.">
        <title>Distribution and organization of auxotrophic genes on the multichromosomal genome of Burkholderia multivorans ATCC 17616.</title>
        <authorList>
            <person name="Komatsu H."/>
            <person name="Imura Y."/>
            <person name="Ohori A."/>
            <person name="Nagata Y."/>
            <person name="Tsuda M."/>
        </authorList>
    </citation>
    <scope>NUCLEOTIDE SEQUENCE [GENOMIC DNA]</scope>
</reference>
<reference key="2">
    <citation type="submission" date="2007-10" db="EMBL/GenBank/DDBJ databases">
        <title>Complete sequence of chromosome 2 of Burkholderia multivorans ATCC 17616.</title>
        <authorList>
            <person name="Copeland A."/>
            <person name="Lucas S."/>
            <person name="Lapidus A."/>
            <person name="Barry K."/>
            <person name="Glavina del Rio T."/>
            <person name="Dalin E."/>
            <person name="Tice H."/>
            <person name="Pitluck S."/>
            <person name="Chain P."/>
            <person name="Malfatti S."/>
            <person name="Shin M."/>
            <person name="Vergez L."/>
            <person name="Schmutz J."/>
            <person name="Larimer F."/>
            <person name="Land M."/>
            <person name="Hauser L."/>
            <person name="Kyrpides N."/>
            <person name="Kim E."/>
            <person name="Tiedje J."/>
            <person name="Richardson P."/>
        </authorList>
    </citation>
    <scope>NUCLEOTIDE SEQUENCE [LARGE SCALE GENOMIC DNA]</scope>
    <source>
        <strain>ATCC 17616 / 249</strain>
    </source>
</reference>
<reference key="3">
    <citation type="submission" date="2007-04" db="EMBL/GenBank/DDBJ databases">
        <title>Complete genome sequence of Burkholderia multivorans ATCC 17616.</title>
        <authorList>
            <person name="Ohtsubo Y."/>
            <person name="Yamashita A."/>
            <person name="Kurokawa K."/>
            <person name="Takami H."/>
            <person name="Yuhara S."/>
            <person name="Nishiyama E."/>
            <person name="Endo R."/>
            <person name="Miyazaki R."/>
            <person name="Ono A."/>
            <person name="Yano K."/>
            <person name="Ito M."/>
            <person name="Sota M."/>
            <person name="Yuji N."/>
            <person name="Hattori M."/>
            <person name="Tsuda M."/>
        </authorList>
    </citation>
    <scope>NUCLEOTIDE SEQUENCE [LARGE SCALE GENOMIC DNA]</scope>
    <source>
        <strain>ATCC 17616 / 249</strain>
    </source>
</reference>
<gene>
    <name evidence="1" type="primary">truA</name>
    <name type="ordered locus">Bmul_4624</name>
    <name type="ordered locus">BMULJ_03887</name>
</gene>
<organism>
    <name type="scientific">Burkholderia multivorans (strain ATCC 17616 / 249)</name>
    <dbReference type="NCBI Taxonomy" id="395019"/>
    <lineage>
        <taxon>Bacteria</taxon>
        <taxon>Pseudomonadati</taxon>
        <taxon>Pseudomonadota</taxon>
        <taxon>Betaproteobacteria</taxon>
        <taxon>Burkholderiales</taxon>
        <taxon>Burkholderiaceae</taxon>
        <taxon>Burkholderia</taxon>
        <taxon>Burkholderia cepacia complex</taxon>
    </lineage>
</organism>
<accession>Q83WJ5</accession>
<accession>A9AMA9</accession>
<protein>
    <recommendedName>
        <fullName evidence="1">tRNA pseudouridine synthase A</fullName>
        <ecNumber evidence="1">5.4.99.12</ecNumber>
    </recommendedName>
    <alternativeName>
        <fullName evidence="1">tRNA pseudouridine(38-40) synthase</fullName>
    </alternativeName>
    <alternativeName>
        <fullName evidence="1">tRNA pseudouridylate synthase I</fullName>
    </alternativeName>
    <alternativeName>
        <fullName evidence="1">tRNA-uridine isomerase I</fullName>
    </alternativeName>
</protein>
<sequence length="270" mass="30094">MRIALGIQYDGAAFCGWQAQPHGNTVQDALERALAEFARVPLHTTVAGRTDTGVHGLGQVVHFDTELDRADFSWVRGTNAFLPPTVAVQWAKSMPDAFHARFSAFERTYYYALYVHPVRSPMLDGRAGWIHTPLDDDAMRAAAAHLLGEHDFSAFRSSECQSKTPVKHLYEIDIRRVGHFLHFRFRANAFLHHMVRNLMGCLVAVGRGRYPADWVADVLAGRDRNRAAPTFMADGLYLAHVGYPAEFAVPPAQLGSVPWSSVWADLDPQP</sequence>
<comment type="function">
    <text evidence="1">Formation of pseudouridine at positions 38, 39 and 40 in the anticodon stem and loop of transfer RNAs.</text>
</comment>
<comment type="catalytic activity">
    <reaction evidence="1">
        <text>uridine(38/39/40) in tRNA = pseudouridine(38/39/40) in tRNA</text>
        <dbReference type="Rhea" id="RHEA:22376"/>
        <dbReference type="Rhea" id="RHEA-COMP:10085"/>
        <dbReference type="Rhea" id="RHEA-COMP:10087"/>
        <dbReference type="ChEBI" id="CHEBI:65314"/>
        <dbReference type="ChEBI" id="CHEBI:65315"/>
        <dbReference type="EC" id="5.4.99.12"/>
    </reaction>
</comment>
<comment type="subunit">
    <text evidence="1">Homodimer.</text>
</comment>
<comment type="similarity">
    <text evidence="1">Belongs to the tRNA pseudouridine synthase TruA family.</text>
</comment>
<evidence type="ECO:0000255" key="1">
    <source>
        <dbReference type="HAMAP-Rule" id="MF_00171"/>
    </source>
</evidence>
<name>TRUA_BURM1</name>
<proteinExistence type="inferred from homology"/>